<protein>
    <recommendedName>
        <fullName evidence="2">Crossover junction endodeoxyribonuclease Hjc</fullName>
        <shortName evidence="2">Hjc</shortName>
        <ecNumber evidence="2">3.1.21.10</ecNumber>
    </recommendedName>
    <alternativeName>
        <fullName evidence="2">Holliday junction resolvase Hjc</fullName>
    </alternativeName>
</protein>
<name>HJC_ARCFU</name>
<accession>O28314</accession>
<organism>
    <name type="scientific">Archaeoglobus fulgidus (strain ATCC 49558 / DSM 4304 / JCM 9628 / NBRC 100126 / VC-16)</name>
    <dbReference type="NCBI Taxonomy" id="224325"/>
    <lineage>
        <taxon>Archaea</taxon>
        <taxon>Methanobacteriati</taxon>
        <taxon>Methanobacteriota</taxon>
        <taxon>Archaeoglobi</taxon>
        <taxon>Archaeoglobales</taxon>
        <taxon>Archaeoglobaceae</taxon>
        <taxon>Archaeoglobus</taxon>
    </lineage>
</organism>
<dbReference type="EC" id="3.1.21.10" evidence="2"/>
<dbReference type="EMBL" id="AE000782">
    <property type="protein sequence ID" value="AAB89293.1"/>
    <property type="molecule type" value="Genomic_DNA"/>
</dbReference>
<dbReference type="PIR" id="D69495">
    <property type="entry name" value="D69495"/>
</dbReference>
<dbReference type="RefSeq" id="WP_010879457.1">
    <property type="nucleotide sequence ID" value="NC_000917.1"/>
</dbReference>
<dbReference type="PDB" id="2WCW">
    <property type="method" value="X-ray"/>
    <property type="resolution" value="1.58 A"/>
    <property type="chains" value="A/B/C/D=2-136"/>
</dbReference>
<dbReference type="PDB" id="2WCZ">
    <property type="method" value="X-ray"/>
    <property type="resolution" value="1.65 A"/>
    <property type="chains" value="A/B=2-136"/>
</dbReference>
<dbReference type="PDB" id="2WIW">
    <property type="method" value="X-ray"/>
    <property type="resolution" value="1.80 A"/>
    <property type="chains" value="A/B=2-136"/>
</dbReference>
<dbReference type="PDB" id="2WIZ">
    <property type="method" value="X-ray"/>
    <property type="resolution" value="3.30 A"/>
    <property type="chains" value="A/B=2-136"/>
</dbReference>
<dbReference type="PDB" id="2WJ0">
    <property type="method" value="X-ray"/>
    <property type="resolution" value="3.10 A"/>
    <property type="chains" value="A/B=2-136"/>
</dbReference>
<dbReference type="PDBsum" id="2WCW"/>
<dbReference type="PDBsum" id="2WCZ"/>
<dbReference type="PDBsum" id="2WIW"/>
<dbReference type="PDBsum" id="2WIZ"/>
<dbReference type="PDBsum" id="2WJ0"/>
<dbReference type="SMR" id="O28314"/>
<dbReference type="STRING" id="224325.AF_1965"/>
<dbReference type="PaxDb" id="224325-AF_1965"/>
<dbReference type="EnsemblBacteria" id="AAB89293">
    <property type="protein sequence ID" value="AAB89293"/>
    <property type="gene ID" value="AF_1965"/>
</dbReference>
<dbReference type="GeneID" id="24795708"/>
<dbReference type="KEGG" id="afu:AF_1965"/>
<dbReference type="eggNOG" id="arCOG00919">
    <property type="taxonomic scope" value="Archaea"/>
</dbReference>
<dbReference type="HOGENOM" id="CLU_139546_0_0_2"/>
<dbReference type="OrthoDB" id="34330at2157"/>
<dbReference type="PhylomeDB" id="O28314"/>
<dbReference type="EvolutionaryTrace" id="O28314"/>
<dbReference type="Proteomes" id="UP000002199">
    <property type="component" value="Chromosome"/>
</dbReference>
<dbReference type="GO" id="GO:0008821">
    <property type="term" value="F:crossover junction DNA endonuclease activity"/>
    <property type="evidence" value="ECO:0007669"/>
    <property type="project" value="UniProtKB-UniRule"/>
</dbReference>
<dbReference type="GO" id="GO:0003677">
    <property type="term" value="F:DNA binding"/>
    <property type="evidence" value="ECO:0007669"/>
    <property type="project" value="UniProtKB-KW"/>
</dbReference>
<dbReference type="GO" id="GO:0000287">
    <property type="term" value="F:magnesium ion binding"/>
    <property type="evidence" value="ECO:0007669"/>
    <property type="project" value="UniProtKB-UniRule"/>
</dbReference>
<dbReference type="GO" id="GO:0006310">
    <property type="term" value="P:DNA recombination"/>
    <property type="evidence" value="ECO:0007669"/>
    <property type="project" value="UniProtKB-UniRule"/>
</dbReference>
<dbReference type="GO" id="GO:0006281">
    <property type="term" value="P:DNA repair"/>
    <property type="evidence" value="ECO:0007669"/>
    <property type="project" value="UniProtKB-UniRule"/>
</dbReference>
<dbReference type="CDD" id="cd00523">
    <property type="entry name" value="Holliday_junction_resolvase"/>
    <property type="match status" value="1"/>
</dbReference>
<dbReference type="Gene3D" id="3.40.1350.10">
    <property type="match status" value="1"/>
</dbReference>
<dbReference type="HAMAP" id="MF_01490">
    <property type="entry name" value="HJ_Resolv_Hjc"/>
    <property type="match status" value="1"/>
</dbReference>
<dbReference type="InterPro" id="IPR002732">
    <property type="entry name" value="Hjc"/>
</dbReference>
<dbReference type="InterPro" id="IPR014428">
    <property type="entry name" value="Hjc_arc"/>
</dbReference>
<dbReference type="InterPro" id="IPR011335">
    <property type="entry name" value="Restrct_endonuc-II-like"/>
</dbReference>
<dbReference type="InterPro" id="IPR011856">
    <property type="entry name" value="tRNA_endonuc-like_dom_sf"/>
</dbReference>
<dbReference type="NCBIfam" id="NF040854">
    <property type="entry name" value="Hol_resolv_Hjc"/>
    <property type="match status" value="1"/>
</dbReference>
<dbReference type="PANTHER" id="PTHR39651">
    <property type="entry name" value="HOLLIDAY JUNCTION RESOLVASE HJC"/>
    <property type="match status" value="1"/>
</dbReference>
<dbReference type="PANTHER" id="PTHR39651:SF1">
    <property type="entry name" value="HOLLIDAY JUNCTION RESOLVASE HJC"/>
    <property type="match status" value="1"/>
</dbReference>
<dbReference type="Pfam" id="PF01870">
    <property type="entry name" value="Hjc"/>
    <property type="match status" value="1"/>
</dbReference>
<dbReference type="PIRSF" id="PIRSF004985">
    <property type="entry name" value="Hlld_jn_rslvs_ar"/>
    <property type="match status" value="1"/>
</dbReference>
<dbReference type="SUPFAM" id="SSF52980">
    <property type="entry name" value="Restriction endonuclease-like"/>
    <property type="match status" value="1"/>
</dbReference>
<feature type="chain" id="PRO_0000429153" description="Crossover junction endodeoxyribonuclease Hjc">
    <location>
        <begin position="1"/>
        <end position="136"/>
    </location>
</feature>
<feature type="active site" evidence="2">
    <location>
        <position position="29"/>
    </location>
</feature>
<feature type="binding site" evidence="2">
    <location>
        <position position="9"/>
    </location>
    <ligand>
        <name>Mg(2+)</name>
        <dbReference type="ChEBI" id="CHEBI:18420"/>
    </ligand>
</feature>
<feature type="binding site" evidence="2">
    <location>
        <position position="38"/>
    </location>
    <ligand>
        <name>Mg(2+)</name>
        <dbReference type="ChEBI" id="CHEBI:18420"/>
    </ligand>
</feature>
<feature type="binding site" evidence="2">
    <location>
        <position position="51"/>
    </location>
    <ligand>
        <name>Mg(2+)</name>
        <dbReference type="ChEBI" id="CHEBI:18420"/>
    </ligand>
</feature>
<feature type="site" description="Transition state stabilizer" evidence="1">
    <location>
        <position position="53"/>
    </location>
</feature>
<feature type="helix" evidence="3">
    <location>
        <begin position="5"/>
        <end position="18"/>
    </location>
</feature>
<feature type="strand" evidence="3">
    <location>
        <begin position="22"/>
        <end position="26"/>
    </location>
</feature>
<feature type="strand" evidence="3">
    <location>
        <begin position="29"/>
        <end position="31"/>
    </location>
</feature>
<feature type="strand" evidence="4">
    <location>
        <begin position="32"/>
        <end position="34"/>
    </location>
</feature>
<feature type="strand" evidence="3">
    <location>
        <begin position="38"/>
        <end position="42"/>
    </location>
</feature>
<feature type="strand" evidence="3">
    <location>
        <begin position="47"/>
        <end position="54"/>
    </location>
</feature>
<feature type="strand" evidence="3">
    <location>
        <begin position="56"/>
        <end position="58"/>
    </location>
</feature>
<feature type="strand" evidence="3">
    <location>
        <begin position="60"/>
        <end position="63"/>
    </location>
</feature>
<feature type="helix" evidence="3">
    <location>
        <begin position="64"/>
        <end position="77"/>
    </location>
</feature>
<feature type="strand" evidence="3">
    <location>
        <begin position="80"/>
        <end position="86"/>
    </location>
</feature>
<feature type="strand" evidence="3">
    <location>
        <begin position="93"/>
        <end position="96"/>
    </location>
</feature>
<feature type="helix" evidence="3">
    <location>
        <begin position="97"/>
        <end position="99"/>
    </location>
</feature>
<feature type="strand" evidence="3">
    <location>
        <begin position="100"/>
        <end position="102"/>
    </location>
</feature>
<feature type="strand" evidence="3">
    <location>
        <begin position="104"/>
        <end position="109"/>
    </location>
</feature>
<feature type="turn" evidence="3">
    <location>
        <begin position="111"/>
        <end position="113"/>
    </location>
</feature>
<feature type="helix" evidence="3">
    <location>
        <begin position="114"/>
        <end position="116"/>
    </location>
</feature>
<feature type="helix" evidence="3">
    <location>
        <begin position="120"/>
        <end position="125"/>
    </location>
</feature>
<feature type="helix" evidence="3">
    <location>
        <begin position="126"/>
        <end position="128"/>
    </location>
</feature>
<gene>
    <name evidence="2" type="primary">hjc</name>
    <name type="ordered locus">AF_1965</name>
</gene>
<reference key="1">
    <citation type="journal article" date="1997" name="Nature">
        <title>The complete genome sequence of the hyperthermophilic, sulphate-reducing archaeon Archaeoglobus fulgidus.</title>
        <authorList>
            <person name="Klenk H.-P."/>
            <person name="Clayton R.A."/>
            <person name="Tomb J.-F."/>
            <person name="White O."/>
            <person name="Nelson K.E."/>
            <person name="Ketchum K.A."/>
            <person name="Dodson R.J."/>
            <person name="Gwinn M.L."/>
            <person name="Hickey E.K."/>
            <person name="Peterson J.D."/>
            <person name="Richardson D.L."/>
            <person name="Kerlavage A.R."/>
            <person name="Graham D.E."/>
            <person name="Kyrpides N.C."/>
            <person name="Fleischmann R.D."/>
            <person name="Quackenbush J."/>
            <person name="Lee N.H."/>
            <person name="Sutton G.G."/>
            <person name="Gill S.R."/>
            <person name="Kirkness E.F."/>
            <person name="Dougherty B.A."/>
            <person name="McKenney K."/>
            <person name="Adams M.D."/>
            <person name="Loftus B.J."/>
            <person name="Peterson S.N."/>
            <person name="Reich C.I."/>
            <person name="McNeil L.K."/>
            <person name="Badger J.H."/>
            <person name="Glodek A."/>
            <person name="Zhou L."/>
            <person name="Overbeek R."/>
            <person name="Gocayne J.D."/>
            <person name="Weidman J.F."/>
            <person name="McDonald L.A."/>
            <person name="Utterback T.R."/>
            <person name="Cotton M.D."/>
            <person name="Spriggs T."/>
            <person name="Artiach P."/>
            <person name="Kaine B.P."/>
            <person name="Sykes S.M."/>
            <person name="Sadow P.W."/>
            <person name="D'Andrea K.P."/>
            <person name="Bowman C."/>
            <person name="Fujii C."/>
            <person name="Garland S.A."/>
            <person name="Mason T.M."/>
            <person name="Olsen G.J."/>
            <person name="Fraser C.M."/>
            <person name="Smith H.O."/>
            <person name="Woese C.R."/>
            <person name="Venter J.C."/>
        </authorList>
    </citation>
    <scope>NUCLEOTIDE SEQUENCE [LARGE SCALE GENOMIC DNA]</scope>
    <source>
        <strain>ATCC 49558 / DSM 4304 / JCM 9628 / NBRC 100126 / VC-16</strain>
    </source>
</reference>
<reference key="2">
    <citation type="journal article" date="2005" name="Acta Crystallogr. F">
        <title>Characterization of crystals of the Hjc resolvase from Archaeoglobus fulgidus grown in gel by counter-diffusion.</title>
        <authorList>
            <person name="Biertumpfel C."/>
            <person name="Basquin J."/>
            <person name="Birkenbihl R.P."/>
            <person name="Suck D."/>
            <person name="Sauter C."/>
        </authorList>
    </citation>
    <scope>PRELIMINARY CRYSTALLIZATION</scope>
</reference>
<reference key="3">
    <citation type="submission" date="2009-03" db="PDB data bank">
        <title>1.6 A resolution structure of Archaeoglobus fulgidus Hjc, a Holliday junction resolvase from an archaeal hyperthermophile.</title>
        <authorList>
            <person name="Carolis C."/>
            <person name="Koehler C."/>
            <person name="Sauter C."/>
            <person name="Basquin J."/>
            <person name="Suck D."/>
            <person name="Toeroe I."/>
        </authorList>
    </citation>
    <scope>X-RAY CRYSTALLOGRAPHY (1.58 ANGSTROMS) OF 2-136</scope>
</reference>
<reference key="4">
    <citation type="submission" date="2009-05" db="PDB data bank">
        <title>Crystal structures of Holliday junction resolvases from Archaeoglobus fulgidus bound to DNA substrate.</title>
        <authorList>
            <person name="Carolis C."/>
            <person name="Koehler C."/>
            <person name="Sauter C."/>
            <person name="Basquin J."/>
            <person name="Suck D."/>
            <person name="Toeroe I."/>
        </authorList>
    </citation>
    <scope>X-RAY CRYSTALLOGRAPHY (3.10 ANGSTROMS) OF 2-136</scope>
</reference>
<proteinExistence type="evidence at protein level"/>
<keyword id="KW-0002">3D-structure</keyword>
<keyword id="KW-0227">DNA damage</keyword>
<keyword id="KW-0233">DNA recombination</keyword>
<keyword id="KW-0234">DNA repair</keyword>
<keyword id="KW-0238">DNA-binding</keyword>
<keyword id="KW-0255">Endonuclease</keyword>
<keyword id="KW-0378">Hydrolase</keyword>
<keyword id="KW-0460">Magnesium</keyword>
<keyword id="KW-0479">Metal-binding</keyword>
<keyword id="KW-0540">Nuclease</keyword>
<keyword id="KW-1185">Reference proteome</keyword>
<comment type="function">
    <text evidence="2">A structure-specific endonuclease that resolves Holliday junction (HJ) intermediates during genetic recombination. Cleaves 4-way DNA junctions introducing paired nicks in opposing strands, leaving a 5'-terminal phosphate and a 3'-terminal hydroxyl group that are subsequently ligated to produce recombinant products.</text>
</comment>
<comment type="catalytic activity">
    <reaction evidence="2">
        <text>Endonucleolytic cleavage at a junction such as a reciprocal single-stranded crossover between two homologous DNA duplexes (Holliday junction).</text>
        <dbReference type="EC" id="3.1.21.10"/>
    </reaction>
</comment>
<comment type="cofactor">
    <cofactor evidence="2">
        <name>Mg(2+)</name>
        <dbReference type="ChEBI" id="CHEBI:18420"/>
    </cofactor>
    <text evidence="2">Binds 1 Mg(2+) ion per subunit.</text>
</comment>
<comment type="subunit">
    <text evidence="2">Homodimer.</text>
</comment>
<comment type="similarity">
    <text evidence="2">Belongs to the Holliday junction resolvase Hjc family.</text>
</comment>
<evidence type="ECO:0000255" key="1"/>
<evidence type="ECO:0000255" key="2">
    <source>
        <dbReference type="HAMAP-Rule" id="MF_01490"/>
    </source>
</evidence>
<evidence type="ECO:0007829" key="3">
    <source>
        <dbReference type="PDB" id="2WCW"/>
    </source>
</evidence>
<evidence type="ECO:0007829" key="4">
    <source>
        <dbReference type="PDB" id="2WCZ"/>
    </source>
</evidence>
<sequence length="136" mass="15437">MKSKGTRFERDLLVELWKAGFAAIRVAGSGVSPFPCPDIVAGNGRTYLAIEVKMRKELPLYLSADEVEQLVTFARGFGAEAYVALKLPRKKWRFFPVQMLERTEKNFKIDESVYPLGLEIAEVAGKFFQERFGEKV</sequence>